<name>SCAF_BPP2</name>
<protein>
    <recommendedName>
        <fullName evidence="5">Capsid assembly scaffolding protein</fullName>
    </recommendedName>
    <alternativeName>
        <fullName>Gene product O</fullName>
        <shortName>GpO</shortName>
    </alternativeName>
    <alternativeName>
        <fullName evidence="5">Head morphogenesis protein</fullName>
    </alternativeName>
    <alternativeName>
        <fullName evidence="5">Scaffold protein</fullName>
    </alternativeName>
    <component>
        <recommendedName>
            <fullName evidence="6">Maturation protease</fullName>
            <ecNumber evidence="6">3.4.21.-</ecNumber>
        </recommendedName>
    </component>
</protein>
<gene>
    <name type="primary">O</name>
</gene>
<organismHost>
    <name type="scientific">Enterobacteriaceae</name>
    <dbReference type="NCBI Taxonomy" id="543"/>
</organismHost>
<reference key="1">
    <citation type="journal article" date="1991" name="Nucleic Acids Res.">
        <title>Nucleotide sequence of the DNA packaging and capsid synthesis genes of bacteriophage P2.</title>
        <authorList>
            <person name="Linderoth N.A."/>
            <person name="Ziermann R."/>
            <person name="Haggaard-Ljungquist E."/>
            <person name="Christie G.E."/>
            <person name="Calendar R."/>
        </authorList>
    </citation>
    <scope>NUCLEOTIDE SEQUENCE [GENOMIC DNA]</scope>
</reference>
<reference key="2">
    <citation type="journal article" date="2008" name="Virology">
        <title>Incorporation of scaffolding protein gpO in bacteriophages P2 and P4.</title>
        <authorList>
            <person name="Chang J.R."/>
            <person name="Poliakov A."/>
            <person name="Prevelige P.E."/>
            <person name="Mobley J.A."/>
            <person name="Dokland T."/>
        </authorList>
    </citation>
    <scope>PROTEOLYTIC CLEAVAGE</scope>
</reference>
<reference key="3">
    <citation type="journal article" date="2009" name="Virology">
        <title>Functional domains of the bacteriophage P2 scaffolding protein: identification of residues involved in assembly and protease activity.</title>
        <authorList>
            <person name="Chang J.R."/>
            <person name="Spilman M.S."/>
            <person name="Rodenburg C.M."/>
            <person name="Dokland T."/>
        </authorList>
    </citation>
    <scope>FUNCTION</scope>
    <scope>CATALYTIC ACTIVITY</scope>
    <scope>ACTIVE SITE</scope>
    <scope>SUBUNIT</scope>
</reference>
<evidence type="ECO:0000255" key="1"/>
<evidence type="ECO:0000256" key="2">
    <source>
        <dbReference type="SAM" id="MobiDB-lite"/>
    </source>
</evidence>
<evidence type="ECO:0000269" key="3">
    <source>
    </source>
</evidence>
<evidence type="ECO:0000269" key="4">
    <source>
    </source>
</evidence>
<evidence type="ECO:0000305" key="5"/>
<evidence type="ECO:0000305" key="6">
    <source>
    </source>
</evidence>
<accession>P25478</accession>
<proteinExistence type="evidence at protein level"/>
<comment type="function">
    <text evidence="6">Scaffolding protein and protease involved in the icosahedric procapsid assembly. Coassembles with the capsid proteins to form the procapsid, in which the scaffolding protein is found within the external shell of icosahedrally arranged capsid protein subunits. In a subsequent step the scaffolding protein molecules are cleaved by the viral protease activity.</text>
</comment>
<comment type="subunit">
    <molecule>Capsid assembly scaffolding protein</molecule>
    <text evidence="4">Homomultimer.</text>
</comment>
<comment type="PTM">
    <text evidence="3">Autocleaves itself into an N-terminal fragment containing the protease activity, that remains in the capsid following maturation.</text>
</comment>
<comment type="similarity">
    <text evidence="5">Belongs to the P2likevirus scaffolding protein family.</text>
</comment>
<keyword id="KW-0175">Coiled coil</keyword>
<keyword id="KW-0378">Hydrolase</keyword>
<keyword id="KW-0645">Protease</keyword>
<keyword id="KW-1185">Reference proteome</keyword>
<keyword id="KW-0720">Serine protease</keyword>
<keyword id="KW-0118">Viral capsid assembly</keyword>
<keyword id="KW-1273">Viral capsid maturation</keyword>
<keyword id="KW-1188">Viral release from host cell</keyword>
<organism>
    <name type="scientific">Escherichia phage P2</name>
    <name type="common">Bacteriophage P2</name>
    <dbReference type="NCBI Taxonomy" id="2905681"/>
    <lineage>
        <taxon>Viruses</taxon>
        <taxon>Duplodnaviria</taxon>
        <taxon>Heunggongvirae</taxon>
        <taxon>Uroviricota</taxon>
        <taxon>Caudoviricetes</taxon>
        <taxon>Peduoviridae</taxon>
        <taxon>Peduovirus</taxon>
        <taxon>Peduovirus P2</taxon>
    </lineage>
</organism>
<sequence>MAKKVSKFFRIGVEGDTCDGRVISAQDIQEMAETFDPRVYGCRINLEHLRGILPDGIFKRYGDVAELKAEKIDDDSALKGKWALFAKITPTDDLIAMNKAAQKVYTSMEIQPNFANTGKCYLVGLAVTDDPASLGTEYLEFCRTAKHNPLNRFKLSPENLISVATPVELEFEDLPETVFTALTEKVKSIFGRKQASDDARLNDVHEAVTAVAEHVQEKLSATEQRLAEMETAFSALKQEVTDRADETSQAFTRLKNSLDHTESLTQQRRSKATGGGGDALMTNC</sequence>
<dbReference type="EC" id="3.4.21.-" evidence="6"/>
<dbReference type="EMBL" id="AF063097">
    <property type="protein sequence ID" value="AAD03270.1"/>
    <property type="molecule type" value="Genomic_DNA"/>
</dbReference>
<dbReference type="PIR" id="S22798">
    <property type="entry name" value="S22798"/>
</dbReference>
<dbReference type="RefSeq" id="NP_046759.1">
    <property type="nucleotide sequence ID" value="NC_001895.1"/>
</dbReference>
<dbReference type="SMR" id="P25478"/>
<dbReference type="MEROPS" id="S73.001"/>
<dbReference type="GeneID" id="77440790"/>
<dbReference type="KEGG" id="vg:77440790"/>
<dbReference type="Proteomes" id="UP000009092">
    <property type="component" value="Genome"/>
</dbReference>
<dbReference type="GO" id="GO:0008236">
    <property type="term" value="F:serine-type peptidase activity"/>
    <property type="evidence" value="ECO:0007669"/>
    <property type="project" value="UniProtKB-KW"/>
</dbReference>
<dbReference type="GO" id="GO:0006508">
    <property type="term" value="P:proteolysis"/>
    <property type="evidence" value="ECO:0007669"/>
    <property type="project" value="UniProtKB-KW"/>
</dbReference>
<dbReference type="GO" id="GO:0046797">
    <property type="term" value="P:viral procapsid maturation"/>
    <property type="evidence" value="ECO:0007669"/>
    <property type="project" value="UniProtKB-KW"/>
</dbReference>
<dbReference type="Gene3D" id="3.90.20.10">
    <property type="match status" value="1"/>
</dbReference>
<dbReference type="InterPro" id="IPR009228">
    <property type="entry name" value="Capsid_scaffold_GpO"/>
</dbReference>
<dbReference type="Pfam" id="PF05929">
    <property type="entry name" value="Phage_GPO"/>
    <property type="match status" value="1"/>
</dbReference>
<feature type="chain" id="PRO_0000433203" description="Maturation protease">
    <location>
        <begin position="1"/>
        <end position="141"/>
    </location>
</feature>
<feature type="chain" id="PRO_0000165258" description="Capsid assembly scaffolding protein">
    <location>
        <begin position="142"/>
        <end position="284"/>
    </location>
</feature>
<feature type="region of interest" description="Disordered" evidence="2">
    <location>
        <begin position="258"/>
        <end position="284"/>
    </location>
</feature>
<feature type="coiled-coil region" evidence="1">
    <location>
        <begin position="206"/>
        <end position="243"/>
    </location>
</feature>
<feature type="active site" evidence="4">
    <location>
        <position position="19"/>
    </location>
</feature>
<feature type="active site" evidence="4">
    <location>
        <position position="48"/>
    </location>
</feature>
<feature type="active site" evidence="4">
    <location>
        <position position="107"/>
    </location>
</feature>
<feature type="site" description="Cleavage" evidence="3">
    <location>
        <begin position="141"/>
        <end position="142"/>
    </location>
</feature>